<feature type="chain" id="PRO_1000021020" description="Inner membrane-spanning protein YciB">
    <location>
        <begin position="1"/>
        <end position="180"/>
    </location>
</feature>
<feature type="transmembrane region" description="Helical" evidence="1">
    <location>
        <begin position="10"/>
        <end position="30"/>
    </location>
</feature>
<feature type="transmembrane region" description="Helical" evidence="1">
    <location>
        <begin position="47"/>
        <end position="67"/>
    </location>
</feature>
<feature type="transmembrane region" description="Helical" evidence="1">
    <location>
        <begin position="74"/>
        <end position="94"/>
    </location>
</feature>
<feature type="transmembrane region" description="Helical" evidence="1">
    <location>
        <begin position="121"/>
        <end position="141"/>
    </location>
</feature>
<feature type="transmembrane region" description="Helical" evidence="1">
    <location>
        <begin position="151"/>
        <end position="171"/>
    </location>
</feature>
<keyword id="KW-0997">Cell inner membrane</keyword>
<keyword id="KW-1003">Cell membrane</keyword>
<keyword id="KW-0472">Membrane</keyword>
<keyword id="KW-1185">Reference proteome</keyword>
<keyword id="KW-0812">Transmembrane</keyword>
<keyword id="KW-1133">Transmembrane helix</keyword>
<organism>
    <name type="scientific">Idiomarina loihiensis (strain ATCC BAA-735 / DSM 15497 / L2-TR)</name>
    <dbReference type="NCBI Taxonomy" id="283942"/>
    <lineage>
        <taxon>Bacteria</taxon>
        <taxon>Pseudomonadati</taxon>
        <taxon>Pseudomonadota</taxon>
        <taxon>Gammaproteobacteria</taxon>
        <taxon>Alteromonadales</taxon>
        <taxon>Idiomarinaceae</taxon>
        <taxon>Idiomarina</taxon>
    </lineage>
</organism>
<reference key="1">
    <citation type="journal article" date="2004" name="Proc. Natl. Acad. Sci. U.S.A.">
        <title>Genome sequence of the deep-sea gamma-proteobacterium Idiomarina loihiensis reveals amino acid fermentation as a source of carbon and energy.</title>
        <authorList>
            <person name="Hou S."/>
            <person name="Saw J.H."/>
            <person name="Lee K.S."/>
            <person name="Freitas T.A."/>
            <person name="Belisle C."/>
            <person name="Kawarabayasi Y."/>
            <person name="Donachie S.P."/>
            <person name="Pikina A."/>
            <person name="Galperin M.Y."/>
            <person name="Koonin E.V."/>
            <person name="Makarova K.S."/>
            <person name="Omelchenko M.V."/>
            <person name="Sorokin A."/>
            <person name="Wolf Y.I."/>
            <person name="Li Q.X."/>
            <person name="Keum Y.S."/>
            <person name="Campbell S."/>
            <person name="Denery J."/>
            <person name="Aizawa S."/>
            <person name="Shibata S."/>
            <person name="Malahoff A."/>
            <person name="Alam M."/>
        </authorList>
    </citation>
    <scope>NUCLEOTIDE SEQUENCE [LARGE SCALE GENOMIC DNA]</scope>
    <source>
        <strain>ATCC BAA-735 / DSM 15497 / L2-TR</strain>
    </source>
</reference>
<comment type="function">
    <text evidence="1">Plays a role in cell envelope biogenesis, maintenance of cell envelope integrity and membrane homeostasis.</text>
</comment>
<comment type="subcellular location">
    <subcellularLocation>
        <location evidence="1">Cell inner membrane</location>
        <topology evidence="1">Multi-pass membrane protein</topology>
    </subcellularLocation>
</comment>
<comment type="similarity">
    <text evidence="1">Belongs to the YciB family.</text>
</comment>
<accession>Q5QX91</accession>
<proteinExistence type="inferred from homology"/>
<evidence type="ECO:0000255" key="1">
    <source>
        <dbReference type="HAMAP-Rule" id="MF_00189"/>
    </source>
</evidence>
<name>YCIB_IDILO</name>
<sequence>MALLLEYLPIIAFFVFYKLADIYVATGVLMVGTVLQILALKLLKQPITTRHWVILAVVMLFGAVTLLLRDDWFIKMKVSVVYVAIALMLLGGLIWKKRSPIQAMMGKDIKLPDTAWSRLTYAWIIFCLALAAVNLYIAEFWSQEAWVNFKVFGILGISLVFTIGTGFYMYHHAIDEETQD</sequence>
<protein>
    <recommendedName>
        <fullName evidence="1">Inner membrane-spanning protein YciB</fullName>
    </recommendedName>
</protein>
<dbReference type="EMBL" id="AE017340">
    <property type="protein sequence ID" value="AAV82590.1"/>
    <property type="molecule type" value="Genomic_DNA"/>
</dbReference>
<dbReference type="STRING" id="283942.IL1757"/>
<dbReference type="GeneID" id="41336934"/>
<dbReference type="KEGG" id="ilo:IL1757"/>
<dbReference type="eggNOG" id="COG2917">
    <property type="taxonomic scope" value="Bacteria"/>
</dbReference>
<dbReference type="HOGENOM" id="CLU_089554_2_0_6"/>
<dbReference type="OrthoDB" id="9788219at2"/>
<dbReference type="Proteomes" id="UP000001171">
    <property type="component" value="Chromosome"/>
</dbReference>
<dbReference type="GO" id="GO:0005886">
    <property type="term" value="C:plasma membrane"/>
    <property type="evidence" value="ECO:0007669"/>
    <property type="project" value="UniProtKB-SubCell"/>
</dbReference>
<dbReference type="HAMAP" id="MF_00189">
    <property type="entry name" value="YciB"/>
    <property type="match status" value="1"/>
</dbReference>
<dbReference type="InterPro" id="IPR006008">
    <property type="entry name" value="YciB"/>
</dbReference>
<dbReference type="NCBIfam" id="TIGR00997">
    <property type="entry name" value="ispZ"/>
    <property type="match status" value="1"/>
</dbReference>
<dbReference type="PANTHER" id="PTHR36917:SF1">
    <property type="entry name" value="INNER MEMBRANE-SPANNING PROTEIN YCIB"/>
    <property type="match status" value="1"/>
</dbReference>
<dbReference type="PANTHER" id="PTHR36917">
    <property type="entry name" value="INTRACELLULAR SEPTATION PROTEIN A-RELATED"/>
    <property type="match status" value="1"/>
</dbReference>
<dbReference type="Pfam" id="PF04279">
    <property type="entry name" value="IspA"/>
    <property type="match status" value="1"/>
</dbReference>
<gene>
    <name evidence="1" type="primary">yciB</name>
    <name type="ordered locus">IL1757</name>
</gene>